<organism>
    <name type="scientific">Allorhizobium ampelinum (strain ATCC BAA-846 / DSM 112012 / S4)</name>
    <name type="common">Agrobacterium vitis (strain S4)</name>
    <dbReference type="NCBI Taxonomy" id="311402"/>
    <lineage>
        <taxon>Bacteria</taxon>
        <taxon>Pseudomonadati</taxon>
        <taxon>Pseudomonadota</taxon>
        <taxon>Alphaproteobacteria</taxon>
        <taxon>Hyphomicrobiales</taxon>
        <taxon>Rhizobiaceae</taxon>
        <taxon>Rhizobium/Agrobacterium group</taxon>
        <taxon>Allorhizobium</taxon>
        <taxon>Allorhizobium ampelinum</taxon>
    </lineage>
</organism>
<reference key="1">
    <citation type="journal article" date="2009" name="J. Bacteriol.">
        <title>Genome sequences of three Agrobacterium biovars help elucidate the evolution of multichromosome genomes in bacteria.</title>
        <authorList>
            <person name="Slater S.C."/>
            <person name="Goldman B.S."/>
            <person name="Goodner B."/>
            <person name="Setubal J.C."/>
            <person name="Farrand S.K."/>
            <person name="Nester E.W."/>
            <person name="Burr T.J."/>
            <person name="Banta L."/>
            <person name="Dickerman A.W."/>
            <person name="Paulsen I."/>
            <person name="Otten L."/>
            <person name="Suen G."/>
            <person name="Welch R."/>
            <person name="Almeida N.F."/>
            <person name="Arnold F."/>
            <person name="Burton O.T."/>
            <person name="Du Z."/>
            <person name="Ewing A."/>
            <person name="Godsy E."/>
            <person name="Heisel S."/>
            <person name="Houmiel K.L."/>
            <person name="Jhaveri J."/>
            <person name="Lu J."/>
            <person name="Miller N.M."/>
            <person name="Norton S."/>
            <person name="Chen Q."/>
            <person name="Phoolcharoen W."/>
            <person name="Ohlin V."/>
            <person name="Ondrusek D."/>
            <person name="Pride N."/>
            <person name="Stricklin S.L."/>
            <person name="Sun J."/>
            <person name="Wheeler C."/>
            <person name="Wilson L."/>
            <person name="Zhu H."/>
            <person name="Wood D.W."/>
        </authorList>
    </citation>
    <scope>NUCLEOTIDE SEQUENCE [LARGE SCALE GENOMIC DNA]</scope>
    <source>
        <strain>ATCC BAA-846 / DSM 112012 / S4</strain>
    </source>
</reference>
<keyword id="KW-1185">Reference proteome</keyword>
<keyword id="KW-0687">Ribonucleoprotein</keyword>
<keyword id="KW-0689">Ribosomal protein</keyword>
<keyword id="KW-0694">RNA-binding</keyword>
<keyword id="KW-0699">rRNA-binding</keyword>
<protein>
    <recommendedName>
        <fullName evidence="1">Small ribosomal subunit protein uS11</fullName>
    </recommendedName>
    <alternativeName>
        <fullName evidence="2">30S ribosomal protein S11</fullName>
    </alternativeName>
</protein>
<evidence type="ECO:0000255" key="1">
    <source>
        <dbReference type="HAMAP-Rule" id="MF_01310"/>
    </source>
</evidence>
<evidence type="ECO:0000305" key="2"/>
<proteinExistence type="inferred from homology"/>
<sequence>MAKEATRVRRRERKNISSGVAHVNSTFNNTMITITDAQGNAIAWSSAGAKGFKGSRKSTPFAAQIAAEDCAKKAQEHGMKSLEVEVCGPGSGRESALRALQAAGFMITSIRDVTPIPHNGCRPRKKRRV</sequence>
<dbReference type="EMBL" id="CP000633">
    <property type="protein sequence ID" value="ACM36340.1"/>
    <property type="molecule type" value="Genomic_DNA"/>
</dbReference>
<dbReference type="RefSeq" id="WP_015915761.1">
    <property type="nucleotide sequence ID" value="NC_011989.1"/>
</dbReference>
<dbReference type="SMR" id="B9JVR0"/>
<dbReference type="STRING" id="311402.Avi_1866"/>
<dbReference type="GeneID" id="60682426"/>
<dbReference type="KEGG" id="avi:Avi_1866"/>
<dbReference type="eggNOG" id="COG0100">
    <property type="taxonomic scope" value="Bacteria"/>
</dbReference>
<dbReference type="HOGENOM" id="CLU_072439_5_0_5"/>
<dbReference type="Proteomes" id="UP000001596">
    <property type="component" value="Chromosome 1"/>
</dbReference>
<dbReference type="GO" id="GO:1990904">
    <property type="term" value="C:ribonucleoprotein complex"/>
    <property type="evidence" value="ECO:0007669"/>
    <property type="project" value="UniProtKB-KW"/>
</dbReference>
<dbReference type="GO" id="GO:0005840">
    <property type="term" value="C:ribosome"/>
    <property type="evidence" value="ECO:0007669"/>
    <property type="project" value="UniProtKB-KW"/>
</dbReference>
<dbReference type="GO" id="GO:0019843">
    <property type="term" value="F:rRNA binding"/>
    <property type="evidence" value="ECO:0007669"/>
    <property type="project" value="UniProtKB-UniRule"/>
</dbReference>
<dbReference type="GO" id="GO:0003735">
    <property type="term" value="F:structural constituent of ribosome"/>
    <property type="evidence" value="ECO:0007669"/>
    <property type="project" value="InterPro"/>
</dbReference>
<dbReference type="GO" id="GO:0006412">
    <property type="term" value="P:translation"/>
    <property type="evidence" value="ECO:0007669"/>
    <property type="project" value="UniProtKB-UniRule"/>
</dbReference>
<dbReference type="FunFam" id="3.30.420.80:FF:000001">
    <property type="entry name" value="30S ribosomal protein S11"/>
    <property type="match status" value="1"/>
</dbReference>
<dbReference type="Gene3D" id="3.30.420.80">
    <property type="entry name" value="Ribosomal protein S11"/>
    <property type="match status" value="1"/>
</dbReference>
<dbReference type="HAMAP" id="MF_01310">
    <property type="entry name" value="Ribosomal_uS11"/>
    <property type="match status" value="1"/>
</dbReference>
<dbReference type="InterPro" id="IPR001971">
    <property type="entry name" value="Ribosomal_uS11"/>
</dbReference>
<dbReference type="InterPro" id="IPR019981">
    <property type="entry name" value="Ribosomal_uS11_bac-type"/>
</dbReference>
<dbReference type="InterPro" id="IPR018102">
    <property type="entry name" value="Ribosomal_uS11_CS"/>
</dbReference>
<dbReference type="InterPro" id="IPR036967">
    <property type="entry name" value="Ribosomal_uS11_sf"/>
</dbReference>
<dbReference type="NCBIfam" id="NF003698">
    <property type="entry name" value="PRK05309.1"/>
    <property type="match status" value="1"/>
</dbReference>
<dbReference type="NCBIfam" id="TIGR03632">
    <property type="entry name" value="uS11_bact"/>
    <property type="match status" value="1"/>
</dbReference>
<dbReference type="PANTHER" id="PTHR11759">
    <property type="entry name" value="40S RIBOSOMAL PROTEIN S14/30S RIBOSOMAL PROTEIN S11"/>
    <property type="match status" value="1"/>
</dbReference>
<dbReference type="Pfam" id="PF00411">
    <property type="entry name" value="Ribosomal_S11"/>
    <property type="match status" value="1"/>
</dbReference>
<dbReference type="PIRSF" id="PIRSF002131">
    <property type="entry name" value="Ribosomal_S11"/>
    <property type="match status" value="1"/>
</dbReference>
<dbReference type="SUPFAM" id="SSF53137">
    <property type="entry name" value="Translational machinery components"/>
    <property type="match status" value="1"/>
</dbReference>
<dbReference type="PROSITE" id="PS00054">
    <property type="entry name" value="RIBOSOMAL_S11"/>
    <property type="match status" value="1"/>
</dbReference>
<name>RS11_ALLAM</name>
<accession>B9JVR0</accession>
<comment type="function">
    <text evidence="1">Located on the platform of the 30S subunit, it bridges several disparate RNA helices of the 16S rRNA. Forms part of the Shine-Dalgarno cleft in the 70S ribosome.</text>
</comment>
<comment type="subunit">
    <text evidence="1">Part of the 30S ribosomal subunit. Interacts with proteins S7 and S18. Binds to IF-3.</text>
</comment>
<comment type="similarity">
    <text evidence="1">Belongs to the universal ribosomal protein uS11 family.</text>
</comment>
<feature type="chain" id="PRO_1000165524" description="Small ribosomal subunit protein uS11">
    <location>
        <begin position="1"/>
        <end position="129"/>
    </location>
</feature>
<gene>
    <name evidence="1" type="primary">rpsK</name>
    <name type="ordered locus">Avi_1866</name>
</gene>